<reference evidence="8" key="1">
    <citation type="journal article" date="2000" name="Science">
        <title>The genome sequence of Drosophila melanogaster.</title>
        <authorList>
            <person name="Adams M.D."/>
            <person name="Celniker S.E."/>
            <person name="Holt R.A."/>
            <person name="Evans C.A."/>
            <person name="Gocayne J.D."/>
            <person name="Amanatides P.G."/>
            <person name="Scherer S.E."/>
            <person name="Li P.W."/>
            <person name="Hoskins R.A."/>
            <person name="Galle R.F."/>
            <person name="George R.A."/>
            <person name="Lewis S.E."/>
            <person name="Richards S."/>
            <person name="Ashburner M."/>
            <person name="Henderson S.N."/>
            <person name="Sutton G.G."/>
            <person name="Wortman J.R."/>
            <person name="Yandell M.D."/>
            <person name="Zhang Q."/>
            <person name="Chen L.X."/>
            <person name="Brandon R.C."/>
            <person name="Rogers Y.-H.C."/>
            <person name="Blazej R.G."/>
            <person name="Champe M."/>
            <person name="Pfeiffer B.D."/>
            <person name="Wan K.H."/>
            <person name="Doyle C."/>
            <person name="Baxter E.G."/>
            <person name="Helt G."/>
            <person name="Nelson C.R."/>
            <person name="Miklos G.L.G."/>
            <person name="Abril J.F."/>
            <person name="Agbayani A."/>
            <person name="An H.-J."/>
            <person name="Andrews-Pfannkoch C."/>
            <person name="Baldwin D."/>
            <person name="Ballew R.M."/>
            <person name="Basu A."/>
            <person name="Baxendale J."/>
            <person name="Bayraktaroglu L."/>
            <person name="Beasley E.M."/>
            <person name="Beeson K.Y."/>
            <person name="Benos P.V."/>
            <person name="Berman B.P."/>
            <person name="Bhandari D."/>
            <person name="Bolshakov S."/>
            <person name="Borkova D."/>
            <person name="Botchan M.R."/>
            <person name="Bouck J."/>
            <person name="Brokstein P."/>
            <person name="Brottier P."/>
            <person name="Burtis K.C."/>
            <person name="Busam D.A."/>
            <person name="Butler H."/>
            <person name="Cadieu E."/>
            <person name="Center A."/>
            <person name="Chandra I."/>
            <person name="Cherry J.M."/>
            <person name="Cawley S."/>
            <person name="Dahlke C."/>
            <person name="Davenport L.B."/>
            <person name="Davies P."/>
            <person name="de Pablos B."/>
            <person name="Delcher A."/>
            <person name="Deng Z."/>
            <person name="Mays A.D."/>
            <person name="Dew I."/>
            <person name="Dietz S.M."/>
            <person name="Dodson K."/>
            <person name="Doup L.E."/>
            <person name="Downes M."/>
            <person name="Dugan-Rocha S."/>
            <person name="Dunkov B.C."/>
            <person name="Dunn P."/>
            <person name="Durbin K.J."/>
            <person name="Evangelista C.C."/>
            <person name="Ferraz C."/>
            <person name="Ferriera S."/>
            <person name="Fleischmann W."/>
            <person name="Fosler C."/>
            <person name="Gabrielian A.E."/>
            <person name="Garg N.S."/>
            <person name="Gelbart W.M."/>
            <person name="Glasser K."/>
            <person name="Glodek A."/>
            <person name="Gong F."/>
            <person name="Gorrell J.H."/>
            <person name="Gu Z."/>
            <person name="Guan P."/>
            <person name="Harris M."/>
            <person name="Harris N.L."/>
            <person name="Harvey D.A."/>
            <person name="Heiman T.J."/>
            <person name="Hernandez J.R."/>
            <person name="Houck J."/>
            <person name="Hostin D."/>
            <person name="Houston K.A."/>
            <person name="Howland T.J."/>
            <person name="Wei M.-H."/>
            <person name="Ibegwam C."/>
            <person name="Jalali M."/>
            <person name="Kalush F."/>
            <person name="Karpen G.H."/>
            <person name="Ke Z."/>
            <person name="Kennison J.A."/>
            <person name="Ketchum K.A."/>
            <person name="Kimmel B.E."/>
            <person name="Kodira C.D."/>
            <person name="Kraft C.L."/>
            <person name="Kravitz S."/>
            <person name="Kulp D."/>
            <person name="Lai Z."/>
            <person name="Lasko P."/>
            <person name="Lei Y."/>
            <person name="Levitsky A.A."/>
            <person name="Li J.H."/>
            <person name="Li Z."/>
            <person name="Liang Y."/>
            <person name="Lin X."/>
            <person name="Liu X."/>
            <person name="Mattei B."/>
            <person name="McIntosh T.C."/>
            <person name="McLeod M.P."/>
            <person name="McPherson D."/>
            <person name="Merkulov G."/>
            <person name="Milshina N.V."/>
            <person name="Mobarry C."/>
            <person name="Morris J."/>
            <person name="Moshrefi A."/>
            <person name="Mount S.M."/>
            <person name="Moy M."/>
            <person name="Murphy B."/>
            <person name="Murphy L."/>
            <person name="Muzny D.M."/>
            <person name="Nelson D.L."/>
            <person name="Nelson D.R."/>
            <person name="Nelson K.A."/>
            <person name="Nixon K."/>
            <person name="Nusskern D.R."/>
            <person name="Pacleb J.M."/>
            <person name="Palazzolo M."/>
            <person name="Pittman G.S."/>
            <person name="Pan S."/>
            <person name="Pollard J."/>
            <person name="Puri V."/>
            <person name="Reese M.G."/>
            <person name="Reinert K."/>
            <person name="Remington K."/>
            <person name="Saunders R.D.C."/>
            <person name="Scheeler F."/>
            <person name="Shen H."/>
            <person name="Shue B.C."/>
            <person name="Siden-Kiamos I."/>
            <person name="Simpson M."/>
            <person name="Skupski M.P."/>
            <person name="Smith T.J."/>
            <person name="Spier E."/>
            <person name="Spradling A.C."/>
            <person name="Stapleton M."/>
            <person name="Strong R."/>
            <person name="Sun E."/>
            <person name="Svirskas R."/>
            <person name="Tector C."/>
            <person name="Turner R."/>
            <person name="Venter E."/>
            <person name="Wang A.H."/>
            <person name="Wang X."/>
            <person name="Wang Z.-Y."/>
            <person name="Wassarman D.A."/>
            <person name="Weinstock G.M."/>
            <person name="Weissenbach J."/>
            <person name="Williams S.M."/>
            <person name="Woodage T."/>
            <person name="Worley K.C."/>
            <person name="Wu D."/>
            <person name="Yang S."/>
            <person name="Yao Q.A."/>
            <person name="Ye J."/>
            <person name="Yeh R.-F."/>
            <person name="Zaveri J.S."/>
            <person name="Zhan M."/>
            <person name="Zhang G."/>
            <person name="Zhao Q."/>
            <person name="Zheng L."/>
            <person name="Zheng X.H."/>
            <person name="Zhong F.N."/>
            <person name="Zhong W."/>
            <person name="Zhou X."/>
            <person name="Zhu S.C."/>
            <person name="Zhu X."/>
            <person name="Smith H.O."/>
            <person name="Gibbs R.A."/>
            <person name="Myers E.W."/>
            <person name="Rubin G.M."/>
            <person name="Venter J.C."/>
        </authorList>
    </citation>
    <scope>NUCLEOTIDE SEQUENCE [LARGE SCALE GENOMIC DNA]</scope>
    <source>
        <strain evidence="8">Berkeley</strain>
    </source>
</reference>
<reference evidence="8" key="2">
    <citation type="journal article" date="2002" name="Genome Biol.">
        <title>Annotation of the Drosophila melanogaster euchromatic genome: a systematic review.</title>
        <authorList>
            <person name="Misra S."/>
            <person name="Crosby M.A."/>
            <person name="Mungall C.J."/>
            <person name="Matthews B.B."/>
            <person name="Campbell K.S."/>
            <person name="Hradecky P."/>
            <person name="Huang Y."/>
            <person name="Kaminker J.S."/>
            <person name="Millburn G.H."/>
            <person name="Prochnik S.E."/>
            <person name="Smith C.D."/>
            <person name="Tupy J.L."/>
            <person name="Whitfield E.J."/>
            <person name="Bayraktaroglu L."/>
            <person name="Berman B.P."/>
            <person name="Bettencourt B.R."/>
            <person name="Celniker S.E."/>
            <person name="de Grey A.D.N.J."/>
            <person name="Drysdale R.A."/>
            <person name="Harris N.L."/>
            <person name="Richter J."/>
            <person name="Russo S."/>
            <person name="Schroeder A.J."/>
            <person name="Shu S.Q."/>
            <person name="Stapleton M."/>
            <person name="Yamada C."/>
            <person name="Ashburner M."/>
            <person name="Gelbart W.M."/>
            <person name="Rubin G.M."/>
            <person name="Lewis S.E."/>
        </authorList>
    </citation>
    <scope>GENOME REANNOTATION</scope>
    <source>
        <strain evidence="8">Berkeley</strain>
    </source>
</reference>
<reference evidence="6" key="3">
    <citation type="journal article" date="2002" name="Genome Biol.">
        <title>A Drosophila full-length cDNA resource.</title>
        <authorList>
            <person name="Stapleton M."/>
            <person name="Carlson J.W."/>
            <person name="Brokstein P."/>
            <person name="Yu C."/>
            <person name="Champe M."/>
            <person name="George R.A."/>
            <person name="Guarin H."/>
            <person name="Kronmiller B."/>
            <person name="Pacleb J.M."/>
            <person name="Park S."/>
            <person name="Wan K.H."/>
            <person name="Rubin G.M."/>
            <person name="Celniker S.E."/>
        </authorList>
    </citation>
    <scope>NUCLEOTIDE SEQUENCE [LARGE SCALE MRNA]</scope>
    <source>
        <strain evidence="6">Berkeley</strain>
        <tissue evidence="6">Embryo</tissue>
    </source>
</reference>
<reference evidence="5" key="4">
    <citation type="journal article" date="2021" name="Nat. Commun.">
        <title>Pegasus, a small extracellular peptide enhancing short-range diffusion of Wingless.</title>
        <authorList>
            <person name="Magny E.G."/>
            <person name="Platero A.I."/>
            <person name="Bishop S.A."/>
            <person name="Pueyo J.I."/>
            <person name="Aguilar-Hidalgo D."/>
            <person name="Couso J.P."/>
        </authorList>
    </citation>
    <scope>FUNCTION</scope>
    <scope>INTERACTION WITH WG</scope>
    <scope>SUBCELLULAR LOCATION</scope>
    <scope>TISSUE SPECIFICITY</scope>
    <scope>DISRUPTION PHENOTYPE</scope>
</reference>
<feature type="signal peptide" evidence="1">
    <location>
        <begin position="1"/>
        <end position="22"/>
    </location>
</feature>
<feature type="chain" id="PRO_5015100117" description="Protein pegasus" evidence="1">
    <location>
        <begin position="23"/>
        <end position="80"/>
    </location>
</feature>
<feature type="domain" description="Kazal-like" evidence="2">
    <location>
        <begin position="24"/>
        <end position="80"/>
    </location>
</feature>
<feature type="site" description="Reactive bond" evidence="2">
    <location>
        <begin position="36"/>
        <end position="37"/>
    </location>
</feature>
<feature type="disulfide bond" evidence="2">
    <location>
        <begin position="30"/>
        <end position="65"/>
    </location>
</feature>
<feature type="disulfide bond" evidence="2">
    <location>
        <begin position="34"/>
        <end position="58"/>
    </location>
</feature>
<feature type="disulfide bond" evidence="2">
    <location>
        <begin position="43"/>
        <end position="79"/>
    </location>
</feature>
<keyword id="KW-1015">Disulfide bond</keyword>
<keyword id="KW-0646">Protease inhibitor</keyword>
<keyword id="KW-1185">Reference proteome</keyword>
<keyword id="KW-0964">Secreted</keyword>
<keyword id="KW-0722">Serine protease inhibitor</keyword>
<keyword id="KW-0732">Signal</keyword>
<accession>Q9VDG1</accession>
<accession>Q95SW1</accession>
<evidence type="ECO:0000255" key="1"/>
<evidence type="ECO:0000255" key="2">
    <source>
        <dbReference type="PROSITE-ProRule" id="PRU00798"/>
    </source>
</evidence>
<evidence type="ECO:0000269" key="3">
    <source>
    </source>
</evidence>
<evidence type="ECO:0000303" key="4">
    <source>
    </source>
</evidence>
<evidence type="ECO:0000305" key="5"/>
<evidence type="ECO:0000312" key="6">
    <source>
        <dbReference type="EMBL" id="AAL25500.1"/>
    </source>
</evidence>
<evidence type="ECO:0000312" key="7">
    <source>
        <dbReference type="FlyBase" id="FBgn0046763"/>
    </source>
</evidence>
<evidence type="ECO:0000312" key="8">
    <source>
        <dbReference type="Proteomes" id="UP000000803"/>
    </source>
</evidence>
<protein>
    <recommendedName>
        <fullName evidence="4">Protein pegasus</fullName>
    </recommendedName>
</protein>
<comment type="function">
    <text evidence="3 5">Increases short-range diffusion of the wingless/wg protein, enhancing its signaling and expression of target genes required for wing margin morphogenesis (PubMed:34580289). May act as a serine protease inhibitor since it possess the Kazal serine protease inhibitor signature (Probable).</text>
</comment>
<comment type="subunit">
    <text evidence="3">Interacts with wg; the interaction facilitates short-range diffusion of wg.</text>
</comment>
<comment type="subcellular location">
    <subcellularLocation>
        <location evidence="3">Secreted</location>
    </subcellularLocation>
</comment>
<comment type="tissue specificity">
    <text evidence="3">Strongly expressed in the developing fly wing but is excluded from the presumptive wing margin.</text>
</comment>
<comment type="disruption phenotype">
    <text evidence="3">High pupal lethality, a significant reduction in the number of chemosensory bristles at the wing margin and narrower distribution of wg.</text>
</comment>
<comment type="miscellaneous">
    <text evidence="4">The name 'pegasus' comes from the mythical winged horse able to carry Greek heroes over long distances.</text>
</comment>
<proteinExistence type="evidence at protein level"/>
<sequence>MKLSAVLLAIALLALSLVQCLGLPDPSTKCVMECDTQEYRSICAADDKGSTKTYRNLCVMKTENCLQNANFQKISDKECP</sequence>
<gene>
    <name evidence="7" type="primary">peg</name>
    <name evidence="7" type="ORF">CG17278</name>
</gene>
<dbReference type="EMBL" id="AE014297">
    <property type="protein sequence ID" value="AAF55833.2"/>
    <property type="molecule type" value="Genomic_DNA"/>
</dbReference>
<dbReference type="EMBL" id="AY060461">
    <property type="protein sequence ID" value="AAL25500.1"/>
    <property type="molecule type" value="mRNA"/>
</dbReference>
<dbReference type="RefSeq" id="NP_652230.1">
    <property type="nucleotide sequence ID" value="NM_143973.3"/>
</dbReference>
<dbReference type="SMR" id="Q9VDG1"/>
<dbReference type="FunCoup" id="Q9VDG1">
    <property type="interactions" value="60"/>
</dbReference>
<dbReference type="IntAct" id="Q9VDG1">
    <property type="interactions" value="10"/>
</dbReference>
<dbReference type="STRING" id="7227.FBpp0083449"/>
<dbReference type="PaxDb" id="7227-FBpp0083449"/>
<dbReference type="DNASU" id="50050"/>
<dbReference type="EnsemblMetazoa" id="FBtr0084047">
    <property type="protein sequence ID" value="FBpp0083449"/>
    <property type="gene ID" value="FBgn0046763"/>
</dbReference>
<dbReference type="GeneID" id="50050"/>
<dbReference type="KEGG" id="dme:Dmel_CG17278"/>
<dbReference type="UCSC" id="CG17278-RA">
    <property type="organism name" value="d. melanogaster"/>
</dbReference>
<dbReference type="AGR" id="FB:FBgn0046763"/>
<dbReference type="CTD" id="50050"/>
<dbReference type="FlyBase" id="FBgn0046763">
    <property type="gene designation" value="peg"/>
</dbReference>
<dbReference type="VEuPathDB" id="VectorBase:FBgn0046763"/>
<dbReference type="eggNOG" id="ENOG502TBNS">
    <property type="taxonomic scope" value="Eukaryota"/>
</dbReference>
<dbReference type="HOGENOM" id="CLU_2592259_0_0_1"/>
<dbReference type="InParanoid" id="Q9VDG1"/>
<dbReference type="OMA" id="CDTQEYR"/>
<dbReference type="OrthoDB" id="6614329at2759"/>
<dbReference type="BioGRID-ORCS" id="50050">
    <property type="hits" value="0 hits in 1 CRISPR screen"/>
</dbReference>
<dbReference type="GenomeRNAi" id="50050"/>
<dbReference type="Proteomes" id="UP000000803">
    <property type="component" value="Chromosome 3R"/>
</dbReference>
<dbReference type="Bgee" id="FBgn0046763">
    <property type="expression patterns" value="Expressed in wing disc and 114 other cell types or tissues"/>
</dbReference>
<dbReference type="GO" id="GO:0005615">
    <property type="term" value="C:extracellular space"/>
    <property type="evidence" value="ECO:0000314"/>
    <property type="project" value="FlyBase"/>
</dbReference>
<dbReference type="GO" id="GO:0004867">
    <property type="term" value="F:serine-type endopeptidase inhibitor activity"/>
    <property type="evidence" value="ECO:0007669"/>
    <property type="project" value="UniProtKB-KW"/>
</dbReference>
<dbReference type="GO" id="GO:0017147">
    <property type="term" value="F:Wnt-protein binding"/>
    <property type="evidence" value="ECO:0000315"/>
    <property type="project" value="FlyBase"/>
</dbReference>
<dbReference type="GO" id="GO:0035592">
    <property type="term" value="P:establishment of protein localization to extracellular region"/>
    <property type="evidence" value="ECO:0000314"/>
    <property type="project" value="FlyBase"/>
</dbReference>
<dbReference type="GO" id="GO:0008587">
    <property type="term" value="P:imaginal disc-derived wing margin morphogenesis"/>
    <property type="evidence" value="ECO:0000315"/>
    <property type="project" value="FlyBase"/>
</dbReference>
<dbReference type="GO" id="GO:0090263">
    <property type="term" value="P:positive regulation of canonical Wnt signaling pathway"/>
    <property type="evidence" value="ECO:0000315"/>
    <property type="project" value="FlyBase"/>
</dbReference>
<dbReference type="Gene3D" id="3.30.60.30">
    <property type="match status" value="1"/>
</dbReference>
<dbReference type="InterPro" id="IPR002350">
    <property type="entry name" value="Kazal_dom"/>
</dbReference>
<dbReference type="InterPro" id="IPR036058">
    <property type="entry name" value="Kazal_dom_sf"/>
</dbReference>
<dbReference type="Pfam" id="PF07648">
    <property type="entry name" value="Kazal_2"/>
    <property type="match status" value="1"/>
</dbReference>
<dbReference type="SUPFAM" id="SSF100895">
    <property type="entry name" value="Kazal-type serine protease inhibitors"/>
    <property type="match status" value="1"/>
</dbReference>
<name>PEG_DROME</name>
<organism evidence="8">
    <name type="scientific">Drosophila melanogaster</name>
    <name type="common">Fruit fly</name>
    <dbReference type="NCBI Taxonomy" id="7227"/>
    <lineage>
        <taxon>Eukaryota</taxon>
        <taxon>Metazoa</taxon>
        <taxon>Ecdysozoa</taxon>
        <taxon>Arthropoda</taxon>
        <taxon>Hexapoda</taxon>
        <taxon>Insecta</taxon>
        <taxon>Pterygota</taxon>
        <taxon>Neoptera</taxon>
        <taxon>Endopterygota</taxon>
        <taxon>Diptera</taxon>
        <taxon>Brachycera</taxon>
        <taxon>Muscomorpha</taxon>
        <taxon>Ephydroidea</taxon>
        <taxon>Drosophilidae</taxon>
        <taxon>Drosophila</taxon>
        <taxon>Sophophora</taxon>
    </lineage>
</organism>